<protein>
    <recommendedName>
        <fullName evidence="1">Endoribonuclease YbeY</fullName>
        <ecNumber evidence="1">3.1.-.-</ecNumber>
    </recommendedName>
</protein>
<organism>
    <name type="scientific">Salmonella typhi</name>
    <dbReference type="NCBI Taxonomy" id="90370"/>
    <lineage>
        <taxon>Bacteria</taxon>
        <taxon>Pseudomonadati</taxon>
        <taxon>Pseudomonadota</taxon>
        <taxon>Gammaproteobacteria</taxon>
        <taxon>Enterobacterales</taxon>
        <taxon>Enterobacteriaceae</taxon>
        <taxon>Salmonella</taxon>
    </lineage>
</organism>
<keyword id="KW-0963">Cytoplasm</keyword>
<keyword id="KW-0255">Endonuclease</keyword>
<keyword id="KW-0378">Hydrolase</keyword>
<keyword id="KW-0479">Metal-binding</keyword>
<keyword id="KW-0540">Nuclease</keyword>
<keyword id="KW-0690">Ribosome biogenesis</keyword>
<keyword id="KW-0698">rRNA processing</keyword>
<keyword id="KW-0862">Zinc</keyword>
<proteinExistence type="inferred from homology"/>
<dbReference type="EC" id="3.1.-.-" evidence="1"/>
<dbReference type="EMBL" id="AL513382">
    <property type="protein sequence ID" value="CAD05139.1"/>
    <property type="molecule type" value="Genomic_DNA"/>
</dbReference>
<dbReference type="EMBL" id="AE014613">
    <property type="protein sequence ID" value="AAO69809.1"/>
    <property type="molecule type" value="Genomic_DNA"/>
</dbReference>
<dbReference type="RefSeq" id="NP_455237.1">
    <property type="nucleotide sequence ID" value="NC_003198.1"/>
</dbReference>
<dbReference type="RefSeq" id="WP_000084477.1">
    <property type="nucleotide sequence ID" value="NZ_WSUR01000015.1"/>
</dbReference>
<dbReference type="SMR" id="Q8Z8G6"/>
<dbReference type="STRING" id="220341.gene:17584720"/>
<dbReference type="DNASU" id="1247171"/>
<dbReference type="KEGG" id="stt:t2205"/>
<dbReference type="KEGG" id="sty:STY0714"/>
<dbReference type="PATRIC" id="fig|220341.7.peg.718"/>
<dbReference type="eggNOG" id="COG0319">
    <property type="taxonomic scope" value="Bacteria"/>
</dbReference>
<dbReference type="HOGENOM" id="CLU_106710_0_1_6"/>
<dbReference type="OMA" id="RMRIHPL"/>
<dbReference type="OrthoDB" id="9807740at2"/>
<dbReference type="Proteomes" id="UP000000541">
    <property type="component" value="Chromosome"/>
</dbReference>
<dbReference type="Proteomes" id="UP000002670">
    <property type="component" value="Chromosome"/>
</dbReference>
<dbReference type="GO" id="GO:0005737">
    <property type="term" value="C:cytoplasm"/>
    <property type="evidence" value="ECO:0007669"/>
    <property type="project" value="UniProtKB-SubCell"/>
</dbReference>
<dbReference type="GO" id="GO:0004222">
    <property type="term" value="F:metalloendopeptidase activity"/>
    <property type="evidence" value="ECO:0007669"/>
    <property type="project" value="InterPro"/>
</dbReference>
<dbReference type="GO" id="GO:0004521">
    <property type="term" value="F:RNA endonuclease activity"/>
    <property type="evidence" value="ECO:0007669"/>
    <property type="project" value="UniProtKB-UniRule"/>
</dbReference>
<dbReference type="GO" id="GO:0008270">
    <property type="term" value="F:zinc ion binding"/>
    <property type="evidence" value="ECO:0007669"/>
    <property type="project" value="UniProtKB-UniRule"/>
</dbReference>
<dbReference type="GO" id="GO:0006364">
    <property type="term" value="P:rRNA processing"/>
    <property type="evidence" value="ECO:0007669"/>
    <property type="project" value="UniProtKB-UniRule"/>
</dbReference>
<dbReference type="Gene3D" id="3.40.390.30">
    <property type="entry name" value="Metalloproteases ('zincins'), catalytic domain"/>
    <property type="match status" value="1"/>
</dbReference>
<dbReference type="HAMAP" id="MF_00009">
    <property type="entry name" value="Endoribonucl_YbeY"/>
    <property type="match status" value="1"/>
</dbReference>
<dbReference type="InterPro" id="IPR023091">
    <property type="entry name" value="MetalPrtase_cat_dom_sf_prd"/>
</dbReference>
<dbReference type="InterPro" id="IPR002036">
    <property type="entry name" value="YbeY"/>
</dbReference>
<dbReference type="InterPro" id="IPR020549">
    <property type="entry name" value="YbeY_CS"/>
</dbReference>
<dbReference type="NCBIfam" id="TIGR00043">
    <property type="entry name" value="rRNA maturation RNase YbeY"/>
    <property type="match status" value="1"/>
</dbReference>
<dbReference type="PANTHER" id="PTHR46986">
    <property type="entry name" value="ENDORIBONUCLEASE YBEY, CHLOROPLASTIC"/>
    <property type="match status" value="1"/>
</dbReference>
<dbReference type="PANTHER" id="PTHR46986:SF1">
    <property type="entry name" value="ENDORIBONUCLEASE YBEY, CHLOROPLASTIC"/>
    <property type="match status" value="1"/>
</dbReference>
<dbReference type="Pfam" id="PF02130">
    <property type="entry name" value="YbeY"/>
    <property type="match status" value="1"/>
</dbReference>
<dbReference type="SUPFAM" id="SSF55486">
    <property type="entry name" value="Metalloproteases ('zincins'), catalytic domain"/>
    <property type="match status" value="1"/>
</dbReference>
<dbReference type="PROSITE" id="PS01306">
    <property type="entry name" value="UPF0054"/>
    <property type="match status" value="1"/>
</dbReference>
<comment type="function">
    <text evidence="1">Single strand-specific metallo-endoribonuclease involved in late-stage 70S ribosome quality control and in maturation of the 3' terminus of the 16S rRNA.</text>
</comment>
<comment type="cofactor">
    <cofactor evidence="1">
        <name>Zn(2+)</name>
        <dbReference type="ChEBI" id="CHEBI:29105"/>
    </cofactor>
    <text evidence="1">Binds 1 zinc ion.</text>
</comment>
<comment type="subcellular location">
    <subcellularLocation>
        <location evidence="1">Cytoplasm</location>
    </subcellularLocation>
</comment>
<comment type="similarity">
    <text evidence="1">Belongs to the endoribonuclease YbeY family.</text>
</comment>
<gene>
    <name evidence="1" type="primary">ybeY</name>
    <name type="ordered locus">STY0714</name>
    <name type="ordered locus">t2205</name>
</gene>
<feature type="chain" id="PRO_0000102522" description="Endoribonuclease YbeY">
    <location>
        <begin position="1"/>
        <end position="157"/>
    </location>
</feature>
<feature type="binding site" evidence="1">
    <location>
        <position position="114"/>
    </location>
    <ligand>
        <name>Zn(2+)</name>
        <dbReference type="ChEBI" id="CHEBI:29105"/>
        <note>catalytic</note>
    </ligand>
</feature>
<feature type="binding site" evidence="1">
    <location>
        <position position="118"/>
    </location>
    <ligand>
        <name>Zn(2+)</name>
        <dbReference type="ChEBI" id="CHEBI:29105"/>
        <note>catalytic</note>
    </ligand>
</feature>
<feature type="binding site" evidence="1">
    <location>
        <position position="124"/>
    </location>
    <ligand>
        <name>Zn(2+)</name>
        <dbReference type="ChEBI" id="CHEBI:29105"/>
        <note>catalytic</note>
    </ligand>
</feature>
<sequence>MSQVILDLQLACENHAGLPDEAQFQRWLDGVIPQFQEEAEVTIRLVDEAESHDLNLTYRGKDKPTNVLSFPFEAPPGIEMPLLGDLIICRQVVEQEAQEQSKPLEAHWAHMVVHGSLHLLGYDHIDDDEAEEMESLETEIMLAMGYEDPYIAEKIAE</sequence>
<evidence type="ECO:0000255" key="1">
    <source>
        <dbReference type="HAMAP-Rule" id="MF_00009"/>
    </source>
</evidence>
<name>YBEY_SALTI</name>
<reference key="1">
    <citation type="journal article" date="2001" name="Nature">
        <title>Complete genome sequence of a multiple drug resistant Salmonella enterica serovar Typhi CT18.</title>
        <authorList>
            <person name="Parkhill J."/>
            <person name="Dougan G."/>
            <person name="James K.D."/>
            <person name="Thomson N.R."/>
            <person name="Pickard D."/>
            <person name="Wain J."/>
            <person name="Churcher C.M."/>
            <person name="Mungall K.L."/>
            <person name="Bentley S.D."/>
            <person name="Holden M.T.G."/>
            <person name="Sebaihia M."/>
            <person name="Baker S."/>
            <person name="Basham D."/>
            <person name="Brooks K."/>
            <person name="Chillingworth T."/>
            <person name="Connerton P."/>
            <person name="Cronin A."/>
            <person name="Davis P."/>
            <person name="Davies R.M."/>
            <person name="Dowd L."/>
            <person name="White N."/>
            <person name="Farrar J."/>
            <person name="Feltwell T."/>
            <person name="Hamlin N."/>
            <person name="Haque A."/>
            <person name="Hien T.T."/>
            <person name="Holroyd S."/>
            <person name="Jagels K."/>
            <person name="Krogh A."/>
            <person name="Larsen T.S."/>
            <person name="Leather S."/>
            <person name="Moule S."/>
            <person name="O'Gaora P."/>
            <person name="Parry C."/>
            <person name="Quail M.A."/>
            <person name="Rutherford K.M."/>
            <person name="Simmonds M."/>
            <person name="Skelton J."/>
            <person name="Stevens K."/>
            <person name="Whitehead S."/>
            <person name="Barrell B.G."/>
        </authorList>
    </citation>
    <scope>NUCLEOTIDE SEQUENCE [LARGE SCALE GENOMIC DNA]</scope>
    <source>
        <strain>CT18</strain>
    </source>
</reference>
<reference key="2">
    <citation type="journal article" date="2003" name="J. Bacteriol.">
        <title>Comparative genomics of Salmonella enterica serovar Typhi strains Ty2 and CT18.</title>
        <authorList>
            <person name="Deng W."/>
            <person name="Liou S.-R."/>
            <person name="Plunkett G. III"/>
            <person name="Mayhew G.F."/>
            <person name="Rose D.J."/>
            <person name="Burland V."/>
            <person name="Kodoyianni V."/>
            <person name="Schwartz D.C."/>
            <person name="Blattner F.R."/>
        </authorList>
    </citation>
    <scope>NUCLEOTIDE SEQUENCE [LARGE SCALE GENOMIC DNA]</scope>
    <source>
        <strain>ATCC 700931 / Ty2</strain>
    </source>
</reference>
<accession>Q8Z8G6</accession>